<accession>P9WPY6</accession>
<accession>L0TA28</accession>
<accession>P0A4Z0</accession>
<accession>P94994</accession>
<comment type="catalytic activity">
    <reaction evidence="1">
        <text>2-(N(omega)-L-arginino)succinate = fumarate + L-arginine</text>
        <dbReference type="Rhea" id="RHEA:24020"/>
        <dbReference type="ChEBI" id="CHEBI:29806"/>
        <dbReference type="ChEBI" id="CHEBI:32682"/>
        <dbReference type="ChEBI" id="CHEBI:57472"/>
        <dbReference type="EC" id="4.3.2.1"/>
    </reaction>
</comment>
<comment type="pathway">
    <text evidence="1">Amino-acid biosynthesis; L-arginine biosynthesis; L-arginine from L-ornithine and carbamoyl phosphate: step 3/3.</text>
</comment>
<comment type="subcellular location">
    <subcellularLocation>
        <location evidence="1">Cytoplasm</location>
    </subcellularLocation>
</comment>
<comment type="similarity">
    <text evidence="1">Belongs to the lyase 1 family. Argininosuccinate lyase subfamily.</text>
</comment>
<organism>
    <name type="scientific">Mycobacterium tuberculosis (strain CDC 1551 / Oshkosh)</name>
    <dbReference type="NCBI Taxonomy" id="83331"/>
    <lineage>
        <taxon>Bacteria</taxon>
        <taxon>Bacillati</taxon>
        <taxon>Actinomycetota</taxon>
        <taxon>Actinomycetes</taxon>
        <taxon>Mycobacteriales</taxon>
        <taxon>Mycobacteriaceae</taxon>
        <taxon>Mycobacterium</taxon>
        <taxon>Mycobacterium tuberculosis complex</taxon>
    </lineage>
</organism>
<protein>
    <recommendedName>
        <fullName evidence="1">Argininosuccinate lyase</fullName>
        <shortName evidence="1">ASAL</shortName>
        <ecNumber evidence="1">4.3.2.1</ecNumber>
    </recommendedName>
    <alternativeName>
        <fullName evidence="1">Arginosuccinase</fullName>
    </alternativeName>
</protein>
<reference key="1">
    <citation type="journal article" date="2002" name="J. Bacteriol.">
        <title>Whole-genome comparison of Mycobacterium tuberculosis clinical and laboratory strains.</title>
        <authorList>
            <person name="Fleischmann R.D."/>
            <person name="Alland D."/>
            <person name="Eisen J.A."/>
            <person name="Carpenter L."/>
            <person name="White O."/>
            <person name="Peterson J.D."/>
            <person name="DeBoy R.T."/>
            <person name="Dodson R.J."/>
            <person name="Gwinn M.L."/>
            <person name="Haft D.H."/>
            <person name="Hickey E.K."/>
            <person name="Kolonay J.F."/>
            <person name="Nelson W.C."/>
            <person name="Umayam L.A."/>
            <person name="Ermolaeva M.D."/>
            <person name="Salzberg S.L."/>
            <person name="Delcher A."/>
            <person name="Utterback T.R."/>
            <person name="Weidman J.F."/>
            <person name="Khouri H.M."/>
            <person name="Gill J."/>
            <person name="Mikula A."/>
            <person name="Bishai W."/>
            <person name="Jacobs W.R. Jr."/>
            <person name="Venter J.C."/>
            <person name="Fraser C.M."/>
        </authorList>
    </citation>
    <scope>NUCLEOTIDE SEQUENCE [LARGE SCALE GENOMIC DNA]</scope>
    <source>
        <strain>CDC 1551 / Oshkosh</strain>
    </source>
</reference>
<keyword id="KW-0028">Amino-acid biosynthesis</keyword>
<keyword id="KW-0055">Arginine biosynthesis</keyword>
<keyword id="KW-0963">Cytoplasm</keyword>
<keyword id="KW-0456">Lyase</keyword>
<keyword id="KW-1185">Reference proteome</keyword>
<evidence type="ECO:0000255" key="1">
    <source>
        <dbReference type="HAMAP-Rule" id="MF_00006"/>
    </source>
</evidence>
<sequence>MSTNEGSLWGGRFAGGPSDALAALSKSTHFDWVLAPYDLTASRAHTMVLFRAGLLTEEQRDGLLAGLDSLAQDVADGSFGPLVTDEDVHSALERGLIDRVGPDLGGRLRAGRSRNDQVAALFRMWLRDAVRRVATGVLDVVGALAEQAAAHPSAIMPGKTHLQSAQPILLAHHLLAHAHPLLRDLDRIVDFDKRAAVSPYGSGALAGSSLGLDPDAIAADLGFSAAADNSVDATAARDFAAEAAFVFAMIAVDLSRLAEDIIVWSSTEFGYVTLHDSWSTGSSIMPQKKNPDIAELARGKSGRLIGNLAGLLATLKAQPLAYNRDLQEDKEPVFDSVAQLELLLPAMAGLVASLTFNVQRMAELAPAGYTLATDLAEWLVRQGVPFRSAHEAAGAAVRAAEQRGVGLQELTDDELAAISPELTPQVREVLTIEGSVSARDCRGGTAPGRVAEQLNAIGEAAERLRRQLVR</sequence>
<feature type="chain" id="PRO_0000426870" description="Argininosuccinate lyase">
    <location>
        <begin position="1"/>
        <end position="470"/>
    </location>
</feature>
<gene>
    <name evidence="1" type="primary">argH</name>
    <name type="ordered locus">MT1697</name>
</gene>
<name>ARLY_MYCTO</name>
<proteinExistence type="inferred from homology"/>
<dbReference type="EC" id="4.3.2.1" evidence="1"/>
<dbReference type="EMBL" id="AE000516">
    <property type="protein sequence ID" value="AAK45966.1"/>
    <property type="molecule type" value="Genomic_DNA"/>
</dbReference>
<dbReference type="PIR" id="F70621">
    <property type="entry name" value="F70621"/>
</dbReference>
<dbReference type="RefSeq" id="WP_003917507.1">
    <property type="nucleotide sequence ID" value="NZ_KK341227.1"/>
</dbReference>
<dbReference type="SMR" id="P9WPY6"/>
<dbReference type="KEGG" id="mtc:MT1697"/>
<dbReference type="PATRIC" id="fig|83331.31.peg.1824"/>
<dbReference type="HOGENOM" id="CLU_027272_2_2_11"/>
<dbReference type="UniPathway" id="UPA00068">
    <property type="reaction ID" value="UER00114"/>
</dbReference>
<dbReference type="Proteomes" id="UP000001020">
    <property type="component" value="Chromosome"/>
</dbReference>
<dbReference type="GO" id="GO:0005829">
    <property type="term" value="C:cytosol"/>
    <property type="evidence" value="ECO:0007669"/>
    <property type="project" value="TreeGrafter"/>
</dbReference>
<dbReference type="GO" id="GO:0004056">
    <property type="term" value="F:argininosuccinate lyase activity"/>
    <property type="evidence" value="ECO:0007669"/>
    <property type="project" value="UniProtKB-UniRule"/>
</dbReference>
<dbReference type="GO" id="GO:0042450">
    <property type="term" value="P:arginine biosynthetic process via ornithine"/>
    <property type="evidence" value="ECO:0007669"/>
    <property type="project" value="InterPro"/>
</dbReference>
<dbReference type="GO" id="GO:0006526">
    <property type="term" value="P:L-arginine biosynthetic process"/>
    <property type="evidence" value="ECO:0007669"/>
    <property type="project" value="UniProtKB-UniRule"/>
</dbReference>
<dbReference type="CDD" id="cd01359">
    <property type="entry name" value="Argininosuccinate_lyase"/>
    <property type="match status" value="1"/>
</dbReference>
<dbReference type="FunFam" id="1.10.40.30:FF:000001">
    <property type="entry name" value="Argininosuccinate lyase"/>
    <property type="match status" value="1"/>
</dbReference>
<dbReference type="FunFam" id="1.20.200.10:FF:000015">
    <property type="entry name" value="argininosuccinate lyase isoform X2"/>
    <property type="match status" value="1"/>
</dbReference>
<dbReference type="Gene3D" id="1.10.40.30">
    <property type="entry name" value="Fumarase/aspartase (C-terminal domain)"/>
    <property type="match status" value="1"/>
</dbReference>
<dbReference type="Gene3D" id="1.20.200.10">
    <property type="entry name" value="Fumarase/aspartase (Central domain)"/>
    <property type="match status" value="1"/>
</dbReference>
<dbReference type="Gene3D" id="1.10.275.10">
    <property type="entry name" value="Fumarase/aspartase (N-terminal domain)"/>
    <property type="match status" value="1"/>
</dbReference>
<dbReference type="HAMAP" id="MF_00006">
    <property type="entry name" value="Arg_succ_lyase"/>
    <property type="match status" value="1"/>
</dbReference>
<dbReference type="InterPro" id="IPR029419">
    <property type="entry name" value="Arg_succ_lyase_C"/>
</dbReference>
<dbReference type="InterPro" id="IPR009049">
    <property type="entry name" value="Argininosuccinate_lyase"/>
</dbReference>
<dbReference type="InterPro" id="IPR024083">
    <property type="entry name" value="Fumarase/histidase_N"/>
</dbReference>
<dbReference type="InterPro" id="IPR020557">
    <property type="entry name" value="Fumarate_lyase_CS"/>
</dbReference>
<dbReference type="InterPro" id="IPR000362">
    <property type="entry name" value="Fumarate_lyase_fam"/>
</dbReference>
<dbReference type="InterPro" id="IPR022761">
    <property type="entry name" value="Fumarate_lyase_N"/>
</dbReference>
<dbReference type="InterPro" id="IPR008948">
    <property type="entry name" value="L-Aspartase-like"/>
</dbReference>
<dbReference type="NCBIfam" id="TIGR00838">
    <property type="entry name" value="argH"/>
    <property type="match status" value="1"/>
</dbReference>
<dbReference type="PANTHER" id="PTHR43814">
    <property type="entry name" value="ARGININOSUCCINATE LYASE"/>
    <property type="match status" value="1"/>
</dbReference>
<dbReference type="PANTHER" id="PTHR43814:SF1">
    <property type="entry name" value="ARGININOSUCCINATE LYASE"/>
    <property type="match status" value="1"/>
</dbReference>
<dbReference type="Pfam" id="PF14698">
    <property type="entry name" value="ASL_C2"/>
    <property type="match status" value="1"/>
</dbReference>
<dbReference type="Pfam" id="PF00206">
    <property type="entry name" value="Lyase_1"/>
    <property type="match status" value="1"/>
</dbReference>
<dbReference type="PRINTS" id="PR00145">
    <property type="entry name" value="ARGSUCLYASE"/>
</dbReference>
<dbReference type="PRINTS" id="PR00149">
    <property type="entry name" value="FUMRATELYASE"/>
</dbReference>
<dbReference type="SUPFAM" id="SSF48557">
    <property type="entry name" value="L-aspartase-like"/>
    <property type="match status" value="1"/>
</dbReference>
<dbReference type="PROSITE" id="PS00163">
    <property type="entry name" value="FUMARATE_LYASES"/>
    <property type="match status" value="1"/>
</dbReference>